<accession>Q87E25</accession>
<dbReference type="EMBL" id="AE009442">
    <property type="protein sequence ID" value="AAO28377.1"/>
    <property type="molecule type" value="Genomic_DNA"/>
</dbReference>
<dbReference type="SMR" id="Q87E25"/>
<dbReference type="KEGG" id="xft:PD_0502"/>
<dbReference type="HOGENOM" id="CLU_001890_0_1_6"/>
<dbReference type="Proteomes" id="UP000002516">
    <property type="component" value="Chromosome"/>
</dbReference>
<dbReference type="GO" id="GO:0009289">
    <property type="term" value="C:pilus"/>
    <property type="evidence" value="ECO:0007669"/>
    <property type="project" value="UniProtKB-SubCell"/>
</dbReference>
<dbReference type="GO" id="GO:0046872">
    <property type="term" value="F:metal ion binding"/>
    <property type="evidence" value="ECO:0007669"/>
    <property type="project" value="UniProtKB-KW"/>
</dbReference>
<dbReference type="InterPro" id="IPR008707">
    <property type="entry name" value="PilY1_beta_prop_dom"/>
</dbReference>
<dbReference type="InterPro" id="IPR011047">
    <property type="entry name" value="Quinoprotein_ADH-like_sf"/>
</dbReference>
<dbReference type="Pfam" id="PF05567">
    <property type="entry name" value="T4P_PilY1"/>
    <property type="match status" value="1"/>
</dbReference>
<dbReference type="SUPFAM" id="SSF50998">
    <property type="entry name" value="Quinoprotein alcohol dehydrogenase-like"/>
    <property type="match status" value="1"/>
</dbReference>
<reference evidence="9 10" key="1">
    <citation type="journal article" date="2003" name="J. Bacteriol.">
        <title>Comparative analyses of the complete genome sequences of Pierce's disease and citrus variegated chlorosis strains of Xylella fastidiosa.</title>
        <authorList>
            <person name="Van Sluys M.A."/>
            <person name="de Oliveira M.C."/>
            <person name="Monteiro-Vitorello C.B."/>
            <person name="Miyaki C.Y."/>
            <person name="Furlan L.R."/>
            <person name="Camargo L.E.A."/>
            <person name="da Silva A.C.R."/>
            <person name="Moon D.H."/>
            <person name="Takita M.A."/>
            <person name="Lemos E.G.M."/>
            <person name="Machado M.A."/>
            <person name="Ferro M.I.T."/>
            <person name="da Silva F.R."/>
            <person name="Goldman M.H.S."/>
            <person name="Goldman G.H."/>
            <person name="Lemos M.V.F."/>
            <person name="El-Dorry H."/>
            <person name="Tsai S.M."/>
            <person name="Carrer H."/>
            <person name="Carraro D.M."/>
            <person name="de Oliveira R.C."/>
            <person name="Nunes L.R."/>
            <person name="Siqueira W.J."/>
            <person name="Coutinho L.L."/>
            <person name="Kimura E.T."/>
            <person name="Ferro E.S."/>
            <person name="Harakava R."/>
            <person name="Kuramae E.E."/>
            <person name="Marino C.L."/>
            <person name="Giglioti E."/>
            <person name="Abreu I.L."/>
            <person name="Alves L.M.C."/>
            <person name="do Amaral A.M."/>
            <person name="Baia G.S."/>
            <person name="Blanco S.R."/>
            <person name="Brito M.S."/>
            <person name="Cannavan F.S."/>
            <person name="Celestino A.V."/>
            <person name="da Cunha A.F."/>
            <person name="Fenille R.C."/>
            <person name="Ferro J.A."/>
            <person name="Formighieri E.F."/>
            <person name="Kishi L.T."/>
            <person name="Leoni S.G."/>
            <person name="Oliveira A.R."/>
            <person name="Rosa V.E. Jr."/>
            <person name="Sassaki F.T."/>
            <person name="Sena J.A.D."/>
            <person name="de Souza A.A."/>
            <person name="Truffi D."/>
            <person name="Tsukumo F."/>
            <person name="Yanai G.M."/>
            <person name="Zaros L.G."/>
            <person name="Civerolo E.L."/>
            <person name="Simpson A.J.G."/>
            <person name="Almeida N.F. Jr."/>
            <person name="Setubal J.C."/>
            <person name="Kitajima J.P."/>
        </authorList>
    </citation>
    <scope>NUCLEOTIDE SEQUENCE [LARGE SCALE GENOMIC DNA]</scope>
    <source>
        <strain evidence="10">Temecula1 / ATCC 700964</strain>
    </source>
</reference>
<reference key="2">
    <citation type="journal article" date="2014" name="Appl. Environ. Microbiol.">
        <title>Calcium-enhanced twitching motility in Xylella fastidiosa is linked to a single PilY1 homolog.</title>
        <authorList>
            <person name="Cruz L.F."/>
            <person name="Parker J.K."/>
            <person name="Cobine P.A."/>
            <person name="De La Fuente L."/>
        </authorList>
    </citation>
    <scope>IDENTIFICATION</scope>
    <scope>INDUCTION</scope>
    <source>
        <strain evidence="6">Temecula1 / ATCC 700964</strain>
    </source>
</reference>
<evidence type="ECO:0000250" key="1">
    <source>
        <dbReference type="UniProtKB" id="Q87B49"/>
    </source>
</evidence>
<evidence type="ECO:0000250" key="2">
    <source>
        <dbReference type="UniProtKB" id="S0HPF7"/>
    </source>
</evidence>
<evidence type="ECO:0000255" key="3"/>
<evidence type="ECO:0000256" key="4">
    <source>
        <dbReference type="SAM" id="MobiDB-lite"/>
    </source>
</evidence>
<evidence type="ECO:0000269" key="5">
    <source>
    </source>
</evidence>
<evidence type="ECO:0000303" key="6">
    <source>
    </source>
</evidence>
<evidence type="ECO:0000305" key="7"/>
<evidence type="ECO:0000305" key="8">
    <source>
    </source>
</evidence>
<evidence type="ECO:0000312" key="9">
    <source>
        <dbReference type="EMBL" id="AAO28377.1"/>
    </source>
</evidence>
<evidence type="ECO:0000312" key="10">
    <source>
        <dbReference type="Proteomes" id="UP000002516"/>
    </source>
</evidence>
<proteinExistence type="evidence at transcript level"/>
<gene>
    <name evidence="9" type="primary">pilY1_2</name>
    <name evidence="9" type="ordered locus">PD_0502</name>
</gene>
<name>PIYH2_XYLFT</name>
<comment type="function">
    <text evidence="8">One of the three PilY1 homologs of X.fastidiosa, which are involved in bacterial twitching motility as component of the filamentous type IV pili (T4P).</text>
</comment>
<comment type="subcellular location">
    <subcellularLocation>
        <location evidence="1">Fimbrium</location>
    </subcellularLocation>
</comment>
<comment type="induction">
    <text evidence="5">Expression is not affected by calcium.</text>
</comment>
<comment type="similarity">
    <text evidence="7">Belongs to the PilY1 family.</text>
</comment>
<feature type="signal peptide" evidence="3">
    <location>
        <begin position="1"/>
        <end position="35"/>
    </location>
</feature>
<feature type="chain" id="PRO_0000431919" description="Type IV pilus biogenesis factor PilY1 homolog PD_0502" evidence="3">
    <location>
        <begin position="36"/>
        <end position="1219"/>
    </location>
</feature>
<feature type="region of interest" description="Disordered" evidence="4">
    <location>
        <begin position="212"/>
        <end position="234"/>
    </location>
</feature>
<feature type="binding site" evidence="2">
    <location>
        <position position="958"/>
    </location>
    <ligand>
        <name>Ca(2+)</name>
        <dbReference type="ChEBI" id="CHEBI:29108"/>
    </ligand>
</feature>
<feature type="binding site" evidence="2">
    <location>
        <position position="960"/>
    </location>
    <ligand>
        <name>Ca(2+)</name>
        <dbReference type="ChEBI" id="CHEBI:29108"/>
    </ligand>
</feature>
<feature type="binding site" evidence="2">
    <location>
        <position position="962"/>
    </location>
    <ligand>
        <name>Ca(2+)</name>
        <dbReference type="ChEBI" id="CHEBI:29108"/>
    </ligand>
</feature>
<feature type="binding site" evidence="2">
    <location>
        <position position="964"/>
    </location>
    <ligand>
        <name>Ca(2+)</name>
        <dbReference type="ChEBI" id="CHEBI:29108"/>
    </ligand>
</feature>
<keyword id="KW-0106">Calcium</keyword>
<keyword id="KW-0281">Fimbrium</keyword>
<keyword id="KW-1029">Fimbrium biogenesis</keyword>
<keyword id="KW-0479">Metal-binding</keyword>
<keyword id="KW-1185">Reference proteome</keyword>
<keyword id="KW-0732">Signal</keyword>
<organism evidence="9">
    <name type="scientific">Xylella fastidiosa (strain Temecula1 / ATCC 700964)</name>
    <dbReference type="NCBI Taxonomy" id="183190"/>
    <lineage>
        <taxon>Bacteria</taxon>
        <taxon>Pseudomonadati</taxon>
        <taxon>Pseudomonadota</taxon>
        <taxon>Gammaproteobacteria</taxon>
        <taxon>Lysobacterales</taxon>
        <taxon>Lysobacteraceae</taxon>
        <taxon>Xylella</taxon>
    </lineage>
</organism>
<sequence>MVGMSRIILNNLFFFRCVVAVFSAHSLVISGAVHAGVQISQSPLHGGGDVPGNLAIVASIEFPTVISVANLADTYTPGVRYVGYFDSNKCYKYHYSSRELDRYFYPVASPRPQANYGCNTTGGVWAGNFLNWAATQTIDPFRSALTGGYRVRDTANETILEKAVMDRAYPGNFPRRTIEGLALTTSVPAQWLRFRMRIDGLGNRMRFTQFPGLSTDPLNTEGQPYDPSRHPLNSNDRGVYEVSVRVKVCDASVGLESNCVAYPSGFYKPEGLVQEYSKRVRYSVFSYKNDDYYLDDGGVLRARQKFVGPKTYYPEQGEKTNPHAEWHPRTGVLYDNPNPEDAKATTHRVGRTIGNSGVINYLNKFSQMETGKNTKGFDPVSELYYTAYRYFKRLGNVPEYSVLTGSVNEKYQQADAFPVITDWDDPIRYACQSNVVLGIGDTHTNFDKNLPGNTNTTGEPVKPQAVRNDRSIDVVKRMAQIFQMEGMRQQDAMTSALAPSFNFLVPGAGNNSAYIAALAYDAHTKDMRPDLEGDQLLTTHWVDVVEGGDYKIPISTNQYWLAAKYGGFQVPAGYDPDKTVNPLSEATWWTNGEYVNGDTKAKRADNFYIAADAEKMVASLKHAFSRIVAEIKGAGTGLSSNSARLETGAVTYQAQFFSGTWRGDLIAYHVDKVTGALTPFWNANFPAWEQRVIKFANATTLQDFTKKNLGQTALASASAQQINYLRGDRSQEGNVPGKLRIRSGIMGDIVNSQPLYVGAPNGRLYTTANFTGASAYAAFAAQQANRVPVVYVGANDGMLHAFDANTGKEIFAFVPRAAMPKLLEYTDQNYGHQYYVDGELTAADIYDTKLGWRSVLVGTLGRGGKGLFALDVTDPSNIRLLWDKTSADIGGLGNTLSKPMIAQTSDGTWSVLLGNGPNSTADNAQLIVMNLLTGHAAQVPVSKTSNNGLSGVFPWSSQSNGITDRVYAGDLLGTLWRFTFSDNAWKVAPLFTATYQGKAQPISATPLGAIERSTGRMWIFFGTGRALSSHDMDNKEVQSWYGLIDQGTTIPGRTRLSQVQIVDEGVVNGYAVRTVSDPKNIGTDGWYMDLISPKSGKQGERMIVSNMFRGAALIGTTRIPDNSDICKLSGSGFVMAINPFTGGRLGQWFFDLNTGGGSGGALNGNPVSGVGVSSAPNSPVFTGNIMQIGADDGTVTSLKTPSSGGLNINRVSWREILRP</sequence>
<protein>
    <recommendedName>
        <fullName evidence="2 6">Type IV pilus biogenesis factor PilY1 homolog PD_0502</fullName>
    </recommendedName>
</protein>